<feature type="chain" id="PRO_0000348083" description="Uncharacterized protein DDB_G0268276">
    <location>
        <begin position="1"/>
        <end position="43"/>
    </location>
</feature>
<feature type="region of interest" description="Disordered" evidence="1">
    <location>
        <begin position="1"/>
        <end position="43"/>
    </location>
</feature>
<feature type="compositionally biased region" description="Acidic residues" evidence="1">
    <location>
        <begin position="20"/>
        <end position="35"/>
    </location>
</feature>
<protein>
    <recommendedName>
        <fullName>Uncharacterized protein DDB_G0268276</fullName>
    </recommendedName>
</protein>
<dbReference type="EMBL" id="AAFI02000003">
    <property type="protein sequence ID" value="EAL73591.1"/>
    <property type="molecule type" value="Genomic_DNA"/>
</dbReference>
<dbReference type="RefSeq" id="XP_647120.1">
    <property type="nucleotide sequence ID" value="XM_642028.1"/>
</dbReference>
<dbReference type="PaxDb" id="44689-DDB0202077"/>
<dbReference type="EnsemblProtists" id="EAL73591">
    <property type="protein sequence ID" value="EAL73591"/>
    <property type="gene ID" value="DDB_G0268276"/>
</dbReference>
<dbReference type="GeneID" id="8615924"/>
<dbReference type="KEGG" id="ddi:DDB_G0268276"/>
<dbReference type="HOGENOM" id="CLU_3243251_0_0_1"/>
<dbReference type="InParanoid" id="Q55GR4"/>
<dbReference type="PRO" id="PR:Q55GR4"/>
<dbReference type="Proteomes" id="UP000002195">
    <property type="component" value="Chromosome 1"/>
</dbReference>
<keyword id="KW-1185">Reference proteome</keyword>
<accession>Q55GR4</accession>
<evidence type="ECO:0000256" key="1">
    <source>
        <dbReference type="SAM" id="MobiDB-lite"/>
    </source>
</evidence>
<sequence>MFKSRIETGGFQFQVHGDDESAMDDEFIDDDDDQQVVEPVTDN</sequence>
<gene>
    <name type="ORF">DDB_G0268276</name>
</gene>
<organism>
    <name type="scientific">Dictyostelium discoideum</name>
    <name type="common">Social amoeba</name>
    <dbReference type="NCBI Taxonomy" id="44689"/>
    <lineage>
        <taxon>Eukaryota</taxon>
        <taxon>Amoebozoa</taxon>
        <taxon>Evosea</taxon>
        <taxon>Eumycetozoa</taxon>
        <taxon>Dictyostelia</taxon>
        <taxon>Dictyosteliales</taxon>
        <taxon>Dictyosteliaceae</taxon>
        <taxon>Dictyostelium</taxon>
    </lineage>
</organism>
<proteinExistence type="predicted"/>
<name>Y2077_DICDI</name>
<reference key="1">
    <citation type="journal article" date="2005" name="Nature">
        <title>The genome of the social amoeba Dictyostelium discoideum.</title>
        <authorList>
            <person name="Eichinger L."/>
            <person name="Pachebat J.A."/>
            <person name="Gloeckner G."/>
            <person name="Rajandream M.A."/>
            <person name="Sucgang R."/>
            <person name="Berriman M."/>
            <person name="Song J."/>
            <person name="Olsen R."/>
            <person name="Szafranski K."/>
            <person name="Xu Q."/>
            <person name="Tunggal B."/>
            <person name="Kummerfeld S."/>
            <person name="Madera M."/>
            <person name="Konfortov B.A."/>
            <person name="Rivero F."/>
            <person name="Bankier A.T."/>
            <person name="Lehmann R."/>
            <person name="Hamlin N."/>
            <person name="Davies R."/>
            <person name="Gaudet P."/>
            <person name="Fey P."/>
            <person name="Pilcher K."/>
            <person name="Chen G."/>
            <person name="Saunders D."/>
            <person name="Sodergren E.J."/>
            <person name="Davis P."/>
            <person name="Kerhornou A."/>
            <person name="Nie X."/>
            <person name="Hall N."/>
            <person name="Anjard C."/>
            <person name="Hemphill L."/>
            <person name="Bason N."/>
            <person name="Farbrother P."/>
            <person name="Desany B."/>
            <person name="Just E."/>
            <person name="Morio T."/>
            <person name="Rost R."/>
            <person name="Churcher C.M."/>
            <person name="Cooper J."/>
            <person name="Haydock S."/>
            <person name="van Driessche N."/>
            <person name="Cronin A."/>
            <person name="Goodhead I."/>
            <person name="Muzny D.M."/>
            <person name="Mourier T."/>
            <person name="Pain A."/>
            <person name="Lu M."/>
            <person name="Harper D."/>
            <person name="Lindsay R."/>
            <person name="Hauser H."/>
            <person name="James K.D."/>
            <person name="Quiles M."/>
            <person name="Madan Babu M."/>
            <person name="Saito T."/>
            <person name="Buchrieser C."/>
            <person name="Wardroper A."/>
            <person name="Felder M."/>
            <person name="Thangavelu M."/>
            <person name="Johnson D."/>
            <person name="Knights A."/>
            <person name="Loulseged H."/>
            <person name="Mungall K.L."/>
            <person name="Oliver K."/>
            <person name="Price C."/>
            <person name="Quail M.A."/>
            <person name="Urushihara H."/>
            <person name="Hernandez J."/>
            <person name="Rabbinowitsch E."/>
            <person name="Steffen D."/>
            <person name="Sanders M."/>
            <person name="Ma J."/>
            <person name="Kohara Y."/>
            <person name="Sharp S."/>
            <person name="Simmonds M.N."/>
            <person name="Spiegler S."/>
            <person name="Tivey A."/>
            <person name="Sugano S."/>
            <person name="White B."/>
            <person name="Walker D."/>
            <person name="Woodward J.R."/>
            <person name="Winckler T."/>
            <person name="Tanaka Y."/>
            <person name="Shaulsky G."/>
            <person name="Schleicher M."/>
            <person name="Weinstock G.M."/>
            <person name="Rosenthal A."/>
            <person name="Cox E.C."/>
            <person name="Chisholm R.L."/>
            <person name="Gibbs R.A."/>
            <person name="Loomis W.F."/>
            <person name="Platzer M."/>
            <person name="Kay R.R."/>
            <person name="Williams J.G."/>
            <person name="Dear P.H."/>
            <person name="Noegel A.A."/>
            <person name="Barrell B.G."/>
            <person name="Kuspa A."/>
        </authorList>
    </citation>
    <scope>NUCLEOTIDE SEQUENCE [LARGE SCALE GENOMIC DNA]</scope>
    <source>
        <strain>AX4</strain>
    </source>
</reference>